<comment type="function">
    <text evidence="1">One of the proteins required for the normal export of preproteins out of the cell cytoplasm. It is a molecular chaperone that binds to a subset of precursor proteins, maintaining them in a translocation-competent state. It also specifically binds to its receptor SecA.</text>
</comment>
<comment type="subunit">
    <text evidence="1">Homotetramer, a dimer of dimers. One homotetramer interacts with 1 SecA dimer.</text>
</comment>
<comment type="subcellular location">
    <subcellularLocation>
        <location evidence="1">Cytoplasm</location>
    </subcellularLocation>
</comment>
<comment type="similarity">
    <text evidence="1">Belongs to the SecB family.</text>
</comment>
<reference key="1">
    <citation type="journal article" date="2008" name="J. Bacteriol.">
        <title>Comparative genome sequence analysis of multidrug-resistant Acinetobacter baumannii.</title>
        <authorList>
            <person name="Adams M.D."/>
            <person name="Goglin K."/>
            <person name="Molyneaux N."/>
            <person name="Hujer K.M."/>
            <person name="Lavender H."/>
            <person name="Jamison J.J."/>
            <person name="MacDonald I.J."/>
            <person name="Martin K.M."/>
            <person name="Russo T."/>
            <person name="Campagnari A.A."/>
            <person name="Hujer A.M."/>
            <person name="Bonomo R.A."/>
            <person name="Gill S.R."/>
        </authorList>
    </citation>
    <scope>NUCLEOTIDE SEQUENCE [LARGE SCALE GENOMIC DNA]</scope>
    <source>
        <strain>AB307-0294</strain>
    </source>
</reference>
<gene>
    <name evidence="1" type="primary">secB</name>
    <name type="ordered locus">ABBFA_003027</name>
</gene>
<name>SECB_ACIB3</name>
<sequence>MSEEQQVQPQLALERIYTKDISFEVPGAQVFTKQWQPELNINLSSAAEKIDPTHFEVSLKVVVQANNDNETAFIVDVTQSGIFLIDNIEEDRLPYILGAYCPNILFPFLREAVNDLVTKGSFPQLLLTPINFDAEFEANMQRAQAAAVEGQA</sequence>
<protein>
    <recommendedName>
        <fullName evidence="1">Protein-export protein SecB</fullName>
    </recommendedName>
</protein>
<dbReference type="EMBL" id="CP001172">
    <property type="protein sequence ID" value="ACJ57670.1"/>
    <property type="molecule type" value="Genomic_DNA"/>
</dbReference>
<dbReference type="RefSeq" id="WP_001288260.1">
    <property type="nucleotide sequence ID" value="NZ_CP001172.1"/>
</dbReference>
<dbReference type="SMR" id="B7H063"/>
<dbReference type="GeneID" id="92892511"/>
<dbReference type="HOGENOM" id="CLU_111574_1_0_6"/>
<dbReference type="Proteomes" id="UP000006924">
    <property type="component" value="Chromosome"/>
</dbReference>
<dbReference type="GO" id="GO:0005737">
    <property type="term" value="C:cytoplasm"/>
    <property type="evidence" value="ECO:0007669"/>
    <property type="project" value="UniProtKB-SubCell"/>
</dbReference>
<dbReference type="GO" id="GO:0051082">
    <property type="term" value="F:unfolded protein binding"/>
    <property type="evidence" value="ECO:0007669"/>
    <property type="project" value="InterPro"/>
</dbReference>
<dbReference type="GO" id="GO:0006457">
    <property type="term" value="P:protein folding"/>
    <property type="evidence" value="ECO:0007669"/>
    <property type="project" value="UniProtKB-UniRule"/>
</dbReference>
<dbReference type="GO" id="GO:0051262">
    <property type="term" value="P:protein tetramerization"/>
    <property type="evidence" value="ECO:0007669"/>
    <property type="project" value="InterPro"/>
</dbReference>
<dbReference type="GO" id="GO:0015031">
    <property type="term" value="P:protein transport"/>
    <property type="evidence" value="ECO:0007669"/>
    <property type="project" value="UniProtKB-UniRule"/>
</dbReference>
<dbReference type="Gene3D" id="3.10.420.10">
    <property type="entry name" value="SecB-like"/>
    <property type="match status" value="1"/>
</dbReference>
<dbReference type="HAMAP" id="MF_00821">
    <property type="entry name" value="SecB"/>
    <property type="match status" value="1"/>
</dbReference>
<dbReference type="InterPro" id="IPR003708">
    <property type="entry name" value="SecB"/>
</dbReference>
<dbReference type="InterPro" id="IPR035958">
    <property type="entry name" value="SecB-like_sf"/>
</dbReference>
<dbReference type="NCBIfam" id="NF004393">
    <property type="entry name" value="PRK05751.1-4"/>
    <property type="match status" value="1"/>
</dbReference>
<dbReference type="NCBIfam" id="TIGR00809">
    <property type="entry name" value="secB"/>
    <property type="match status" value="1"/>
</dbReference>
<dbReference type="PANTHER" id="PTHR36918">
    <property type="match status" value="1"/>
</dbReference>
<dbReference type="PANTHER" id="PTHR36918:SF1">
    <property type="entry name" value="PROTEIN-EXPORT PROTEIN SECB"/>
    <property type="match status" value="1"/>
</dbReference>
<dbReference type="Pfam" id="PF02556">
    <property type="entry name" value="SecB"/>
    <property type="match status" value="1"/>
</dbReference>
<dbReference type="PRINTS" id="PR01594">
    <property type="entry name" value="SECBCHAPRONE"/>
</dbReference>
<dbReference type="SUPFAM" id="SSF54611">
    <property type="entry name" value="SecB-like"/>
    <property type="match status" value="1"/>
</dbReference>
<accession>B7H063</accession>
<keyword id="KW-0143">Chaperone</keyword>
<keyword id="KW-0963">Cytoplasm</keyword>
<keyword id="KW-0653">Protein transport</keyword>
<keyword id="KW-0811">Translocation</keyword>
<keyword id="KW-0813">Transport</keyword>
<evidence type="ECO:0000255" key="1">
    <source>
        <dbReference type="HAMAP-Rule" id="MF_00821"/>
    </source>
</evidence>
<organism>
    <name type="scientific">Acinetobacter baumannii (strain AB307-0294)</name>
    <dbReference type="NCBI Taxonomy" id="557600"/>
    <lineage>
        <taxon>Bacteria</taxon>
        <taxon>Pseudomonadati</taxon>
        <taxon>Pseudomonadota</taxon>
        <taxon>Gammaproteobacteria</taxon>
        <taxon>Moraxellales</taxon>
        <taxon>Moraxellaceae</taxon>
        <taxon>Acinetobacter</taxon>
        <taxon>Acinetobacter calcoaceticus/baumannii complex</taxon>
    </lineage>
</organism>
<proteinExistence type="inferred from homology"/>
<feature type="chain" id="PRO_1000134353" description="Protein-export protein SecB">
    <location>
        <begin position="1"/>
        <end position="152"/>
    </location>
</feature>